<accession>C3M8G8</accession>
<proteinExistence type="inferred from homology"/>
<gene>
    <name evidence="1" type="primary">tam</name>
    <name type="ordered locus">NGR_c07210</name>
</gene>
<protein>
    <recommendedName>
        <fullName evidence="1">Trans-aconitate 2-methyltransferase</fullName>
        <ecNumber evidence="1">2.1.1.144</ecNumber>
    </recommendedName>
</protein>
<keyword id="KW-0963">Cytoplasm</keyword>
<keyword id="KW-0489">Methyltransferase</keyword>
<keyword id="KW-1185">Reference proteome</keyword>
<keyword id="KW-0949">S-adenosyl-L-methionine</keyword>
<keyword id="KW-0808">Transferase</keyword>
<evidence type="ECO:0000255" key="1">
    <source>
        <dbReference type="HAMAP-Rule" id="MF_00560"/>
    </source>
</evidence>
<organism>
    <name type="scientific">Sinorhizobium fredii (strain NBRC 101917 / NGR234)</name>
    <dbReference type="NCBI Taxonomy" id="394"/>
    <lineage>
        <taxon>Bacteria</taxon>
        <taxon>Pseudomonadati</taxon>
        <taxon>Pseudomonadota</taxon>
        <taxon>Alphaproteobacteria</taxon>
        <taxon>Hyphomicrobiales</taxon>
        <taxon>Rhizobiaceae</taxon>
        <taxon>Sinorhizobium/Ensifer group</taxon>
        <taxon>Sinorhizobium</taxon>
    </lineage>
</organism>
<feature type="chain" id="PRO_1000196658" description="Trans-aconitate 2-methyltransferase">
    <location>
        <begin position="1"/>
        <end position="257"/>
    </location>
</feature>
<sequence>MSWSAAQYVKFEDERTRPARDLLAQVPDLPAGPAFDLGCGPGNSTQLILERFPNNPLVGIDSDENMLEAARKRLLGLRFERADLIGWTPPQGAALFFANAVFQWLPKHIDLLERLVDALVPGGTLAVQMPDNLDEPSHLLMQETAEERAFAAAFSGRTIRRVPLPSPRTYVERLAPKVARVDVWHTTYYHPLASANAIVEWVKGTGLRPYLDALPANRRKDYLAAYAEKIRRAYPAMGDGRVLLRFPRLFIVAVKAA</sequence>
<dbReference type="EC" id="2.1.1.144" evidence="1"/>
<dbReference type="EMBL" id="CP001389">
    <property type="protein sequence ID" value="ACP24514.1"/>
    <property type="molecule type" value="Genomic_DNA"/>
</dbReference>
<dbReference type="RefSeq" id="WP_012707299.1">
    <property type="nucleotide sequence ID" value="NC_012587.1"/>
</dbReference>
<dbReference type="RefSeq" id="YP_002825267.1">
    <property type="nucleotide sequence ID" value="NC_012587.1"/>
</dbReference>
<dbReference type="SMR" id="C3M8G8"/>
<dbReference type="STRING" id="394.NGR_c07210"/>
<dbReference type="KEGG" id="rhi:NGR_c07210"/>
<dbReference type="PATRIC" id="fig|394.7.peg.3536"/>
<dbReference type="eggNOG" id="COG4106">
    <property type="taxonomic scope" value="Bacteria"/>
</dbReference>
<dbReference type="HOGENOM" id="CLU_037990_5_2_5"/>
<dbReference type="OrthoDB" id="9795085at2"/>
<dbReference type="Proteomes" id="UP000001054">
    <property type="component" value="Chromosome"/>
</dbReference>
<dbReference type="GO" id="GO:0005737">
    <property type="term" value="C:cytoplasm"/>
    <property type="evidence" value="ECO:0007669"/>
    <property type="project" value="UniProtKB-SubCell"/>
</dbReference>
<dbReference type="GO" id="GO:0030798">
    <property type="term" value="F:trans-aconitate 2-methyltransferase activity"/>
    <property type="evidence" value="ECO:0007669"/>
    <property type="project" value="UniProtKB-UniRule"/>
</dbReference>
<dbReference type="GO" id="GO:0032259">
    <property type="term" value="P:methylation"/>
    <property type="evidence" value="ECO:0007669"/>
    <property type="project" value="UniProtKB-KW"/>
</dbReference>
<dbReference type="CDD" id="cd02440">
    <property type="entry name" value="AdoMet_MTases"/>
    <property type="match status" value="1"/>
</dbReference>
<dbReference type="Gene3D" id="1.10.150.290">
    <property type="entry name" value="S-adenosyl-L-methionine-dependent methyltransferases"/>
    <property type="match status" value="1"/>
</dbReference>
<dbReference type="Gene3D" id="3.40.50.150">
    <property type="entry name" value="Vaccinia Virus protein VP39"/>
    <property type="match status" value="1"/>
</dbReference>
<dbReference type="HAMAP" id="MF_00560">
    <property type="entry name" value="Tran_acon_Me_trans"/>
    <property type="match status" value="1"/>
</dbReference>
<dbReference type="InterPro" id="IPR013217">
    <property type="entry name" value="Methyltransf_12"/>
</dbReference>
<dbReference type="InterPro" id="IPR029063">
    <property type="entry name" value="SAM-dependent_MTases_sf"/>
</dbReference>
<dbReference type="InterPro" id="IPR023506">
    <property type="entry name" value="Trans-aconitate_MeTrfase"/>
</dbReference>
<dbReference type="InterPro" id="IPR023149">
    <property type="entry name" value="Trans_acon_MeTrfase_C"/>
</dbReference>
<dbReference type="NCBIfam" id="NF002463">
    <property type="entry name" value="PRK01683.1"/>
    <property type="match status" value="1"/>
</dbReference>
<dbReference type="PANTHER" id="PTHR43861:SF1">
    <property type="entry name" value="TRANS-ACONITATE 2-METHYLTRANSFERASE"/>
    <property type="match status" value="1"/>
</dbReference>
<dbReference type="PANTHER" id="PTHR43861">
    <property type="entry name" value="TRANS-ACONITATE 2-METHYLTRANSFERASE-RELATED"/>
    <property type="match status" value="1"/>
</dbReference>
<dbReference type="Pfam" id="PF08242">
    <property type="entry name" value="Methyltransf_12"/>
    <property type="match status" value="1"/>
</dbReference>
<dbReference type="SUPFAM" id="SSF53335">
    <property type="entry name" value="S-adenosyl-L-methionine-dependent methyltransferases"/>
    <property type="match status" value="1"/>
</dbReference>
<name>TAM_SINFN</name>
<reference key="1">
    <citation type="journal article" date="2009" name="Appl. Environ. Microbiol.">
        <title>Rhizobium sp. strain NGR234 possesses a remarkable number of secretion systems.</title>
        <authorList>
            <person name="Schmeisser C."/>
            <person name="Liesegang H."/>
            <person name="Krysciak D."/>
            <person name="Bakkou N."/>
            <person name="Le Quere A."/>
            <person name="Wollherr A."/>
            <person name="Heinemeyer I."/>
            <person name="Morgenstern B."/>
            <person name="Pommerening-Roeser A."/>
            <person name="Flores M."/>
            <person name="Palacios R."/>
            <person name="Brenner S."/>
            <person name="Gottschalk G."/>
            <person name="Schmitz R.A."/>
            <person name="Broughton W.J."/>
            <person name="Perret X."/>
            <person name="Strittmatter A.W."/>
            <person name="Streit W.R."/>
        </authorList>
    </citation>
    <scope>NUCLEOTIDE SEQUENCE [LARGE SCALE GENOMIC DNA]</scope>
    <source>
        <strain>NBRC 101917 / NGR234</strain>
    </source>
</reference>
<comment type="function">
    <text evidence="1">Catalyzes the S-adenosylmethionine monomethyl esterification of trans-aconitate.</text>
</comment>
<comment type="catalytic activity">
    <reaction evidence="1">
        <text>trans-aconitate + S-adenosyl-L-methionine = (E)-3-(methoxycarbonyl)pent-2-enedioate + S-adenosyl-L-homocysteine</text>
        <dbReference type="Rhea" id="RHEA:14969"/>
        <dbReference type="ChEBI" id="CHEBI:15708"/>
        <dbReference type="ChEBI" id="CHEBI:57470"/>
        <dbReference type="ChEBI" id="CHEBI:57856"/>
        <dbReference type="ChEBI" id="CHEBI:59789"/>
        <dbReference type="EC" id="2.1.1.144"/>
    </reaction>
</comment>
<comment type="subcellular location">
    <subcellularLocation>
        <location evidence="1">Cytoplasm</location>
    </subcellularLocation>
</comment>
<comment type="similarity">
    <text evidence="1">Belongs to the methyltransferase superfamily. Tam family.</text>
</comment>